<proteinExistence type="inferred from homology"/>
<accession>B7IXJ0</accession>
<keyword id="KW-0028">Amino-acid biosynthesis</keyword>
<keyword id="KW-0057">Aromatic amino acid biosynthesis</keyword>
<keyword id="KW-0456">Lyase</keyword>
<sequence length="146" mass="16093">MKKLLLVNGPNLNRLGVREVNVYGKGTLATLEADMKQEAETMGVELECFQSNHEGAIIDIIHEAEDIYEGIILNPGAFTHYSYAIRDAIASISIPVIEVHISNIHQRESFRHESVTAAVCAGQIVGFGFYGYKLALFALMEKLRGA</sequence>
<comment type="function">
    <text evidence="1">Catalyzes a trans-dehydration via an enolate intermediate.</text>
</comment>
<comment type="catalytic activity">
    <reaction evidence="1">
        <text>3-dehydroquinate = 3-dehydroshikimate + H2O</text>
        <dbReference type="Rhea" id="RHEA:21096"/>
        <dbReference type="ChEBI" id="CHEBI:15377"/>
        <dbReference type="ChEBI" id="CHEBI:16630"/>
        <dbReference type="ChEBI" id="CHEBI:32364"/>
        <dbReference type="EC" id="4.2.1.10"/>
    </reaction>
</comment>
<comment type="pathway">
    <text evidence="1">Metabolic intermediate biosynthesis; chorismate biosynthesis; chorismate from D-erythrose 4-phosphate and phosphoenolpyruvate: step 3/7.</text>
</comment>
<comment type="subunit">
    <text evidence="1">Homododecamer.</text>
</comment>
<comment type="similarity">
    <text evidence="1">Belongs to the type-II 3-dehydroquinase family.</text>
</comment>
<evidence type="ECO:0000255" key="1">
    <source>
        <dbReference type="HAMAP-Rule" id="MF_00169"/>
    </source>
</evidence>
<organism>
    <name type="scientific">Bacillus cereus (strain G9842)</name>
    <dbReference type="NCBI Taxonomy" id="405531"/>
    <lineage>
        <taxon>Bacteria</taxon>
        <taxon>Bacillati</taxon>
        <taxon>Bacillota</taxon>
        <taxon>Bacilli</taxon>
        <taxon>Bacillales</taxon>
        <taxon>Bacillaceae</taxon>
        <taxon>Bacillus</taxon>
        <taxon>Bacillus cereus group</taxon>
    </lineage>
</organism>
<gene>
    <name evidence="1" type="primary">aroQ</name>
    <name type="ordered locus">BCG9842_B0925</name>
</gene>
<feature type="chain" id="PRO_1000118273" description="3-dehydroquinate dehydratase">
    <location>
        <begin position="1"/>
        <end position="146"/>
    </location>
</feature>
<feature type="active site" description="Proton acceptor" evidence="1">
    <location>
        <position position="23"/>
    </location>
</feature>
<feature type="active site" description="Proton donor" evidence="1">
    <location>
        <position position="100"/>
    </location>
</feature>
<feature type="binding site" evidence="1">
    <location>
        <position position="74"/>
    </location>
    <ligand>
        <name>substrate</name>
    </ligand>
</feature>
<feature type="binding site" evidence="1">
    <location>
        <position position="80"/>
    </location>
    <ligand>
        <name>substrate</name>
    </ligand>
</feature>
<feature type="binding site" evidence="1">
    <location>
        <position position="87"/>
    </location>
    <ligand>
        <name>substrate</name>
    </ligand>
</feature>
<feature type="binding site" evidence="1">
    <location>
        <begin position="101"/>
        <end position="102"/>
    </location>
    <ligand>
        <name>substrate</name>
    </ligand>
</feature>
<feature type="binding site" evidence="1">
    <location>
        <position position="111"/>
    </location>
    <ligand>
        <name>substrate</name>
    </ligand>
</feature>
<feature type="site" description="Transition state stabilizer" evidence="1">
    <location>
        <position position="18"/>
    </location>
</feature>
<protein>
    <recommendedName>
        <fullName evidence="1">3-dehydroquinate dehydratase</fullName>
        <shortName evidence="1">3-dehydroquinase</shortName>
        <ecNumber evidence="1">4.2.1.10</ecNumber>
    </recommendedName>
    <alternativeName>
        <fullName evidence="1">Type II DHQase</fullName>
    </alternativeName>
</protein>
<reference key="1">
    <citation type="submission" date="2008-10" db="EMBL/GenBank/DDBJ databases">
        <title>Genome sequence of Bacillus cereus G9842.</title>
        <authorList>
            <person name="Dodson R.J."/>
            <person name="Durkin A.S."/>
            <person name="Rosovitz M.J."/>
            <person name="Rasko D.A."/>
            <person name="Hoffmaster A."/>
            <person name="Ravel J."/>
            <person name="Sutton G."/>
        </authorList>
    </citation>
    <scope>NUCLEOTIDE SEQUENCE [LARGE SCALE GENOMIC DNA]</scope>
    <source>
        <strain>G9842</strain>
    </source>
</reference>
<name>AROQ_BACC2</name>
<dbReference type="EC" id="4.2.1.10" evidence="1"/>
<dbReference type="EMBL" id="CP001186">
    <property type="protein sequence ID" value="ACK98385.1"/>
    <property type="molecule type" value="Genomic_DNA"/>
</dbReference>
<dbReference type="RefSeq" id="WP_000735141.1">
    <property type="nucleotide sequence ID" value="NC_011772.1"/>
</dbReference>
<dbReference type="SMR" id="B7IXJ0"/>
<dbReference type="KEGG" id="bcg:BCG9842_B0925"/>
<dbReference type="HOGENOM" id="CLU_090968_3_0_9"/>
<dbReference type="UniPathway" id="UPA00053">
    <property type="reaction ID" value="UER00086"/>
</dbReference>
<dbReference type="Proteomes" id="UP000006744">
    <property type="component" value="Chromosome"/>
</dbReference>
<dbReference type="GO" id="GO:0003855">
    <property type="term" value="F:3-dehydroquinate dehydratase activity"/>
    <property type="evidence" value="ECO:0007669"/>
    <property type="project" value="UniProtKB-UniRule"/>
</dbReference>
<dbReference type="GO" id="GO:0008652">
    <property type="term" value="P:amino acid biosynthetic process"/>
    <property type="evidence" value="ECO:0007669"/>
    <property type="project" value="UniProtKB-KW"/>
</dbReference>
<dbReference type="GO" id="GO:0009073">
    <property type="term" value="P:aromatic amino acid family biosynthetic process"/>
    <property type="evidence" value="ECO:0007669"/>
    <property type="project" value="UniProtKB-KW"/>
</dbReference>
<dbReference type="GO" id="GO:0009423">
    <property type="term" value="P:chorismate biosynthetic process"/>
    <property type="evidence" value="ECO:0007669"/>
    <property type="project" value="UniProtKB-UniRule"/>
</dbReference>
<dbReference type="GO" id="GO:0019631">
    <property type="term" value="P:quinate catabolic process"/>
    <property type="evidence" value="ECO:0007669"/>
    <property type="project" value="TreeGrafter"/>
</dbReference>
<dbReference type="CDD" id="cd00466">
    <property type="entry name" value="DHQase_II"/>
    <property type="match status" value="1"/>
</dbReference>
<dbReference type="Gene3D" id="3.40.50.9100">
    <property type="entry name" value="Dehydroquinase, class II"/>
    <property type="match status" value="1"/>
</dbReference>
<dbReference type="HAMAP" id="MF_00169">
    <property type="entry name" value="AroQ"/>
    <property type="match status" value="1"/>
</dbReference>
<dbReference type="InterPro" id="IPR001874">
    <property type="entry name" value="DHquinase_II"/>
</dbReference>
<dbReference type="InterPro" id="IPR018509">
    <property type="entry name" value="DHquinase_II_CS"/>
</dbReference>
<dbReference type="InterPro" id="IPR036441">
    <property type="entry name" value="DHquinase_II_sf"/>
</dbReference>
<dbReference type="NCBIfam" id="TIGR01088">
    <property type="entry name" value="aroQ"/>
    <property type="match status" value="1"/>
</dbReference>
<dbReference type="NCBIfam" id="NF003805">
    <property type="entry name" value="PRK05395.1-2"/>
    <property type="match status" value="1"/>
</dbReference>
<dbReference type="NCBIfam" id="NF003806">
    <property type="entry name" value="PRK05395.1-3"/>
    <property type="match status" value="1"/>
</dbReference>
<dbReference type="NCBIfam" id="NF003807">
    <property type="entry name" value="PRK05395.1-4"/>
    <property type="match status" value="1"/>
</dbReference>
<dbReference type="PANTHER" id="PTHR21272">
    <property type="entry name" value="CATABOLIC 3-DEHYDROQUINASE"/>
    <property type="match status" value="1"/>
</dbReference>
<dbReference type="PANTHER" id="PTHR21272:SF3">
    <property type="entry name" value="CATABOLIC 3-DEHYDROQUINASE"/>
    <property type="match status" value="1"/>
</dbReference>
<dbReference type="Pfam" id="PF01220">
    <property type="entry name" value="DHquinase_II"/>
    <property type="match status" value="1"/>
</dbReference>
<dbReference type="PIRSF" id="PIRSF001399">
    <property type="entry name" value="DHquinase_II"/>
    <property type="match status" value="1"/>
</dbReference>
<dbReference type="SUPFAM" id="SSF52304">
    <property type="entry name" value="Type II 3-dehydroquinate dehydratase"/>
    <property type="match status" value="1"/>
</dbReference>
<dbReference type="PROSITE" id="PS01029">
    <property type="entry name" value="DEHYDROQUINASE_II"/>
    <property type="match status" value="1"/>
</dbReference>